<name>AT2B4_HUMAN</name>
<sequence length="1241" mass="137920">MTNPSDRVLPANSMAESREGDFGCTVMELRKLMELRSRDALTQINVHYGGVQNLCSRLKTSPVEGLSGNPADLEKRRQVFGHNVIPPKKPKTFLELVWEALQDVTLIILEIAAIISLVLSFYRPAGEENELCGQVATTPEDENEAQAGWIEGAAILFSVIIVVLVTAFNDWSKEKQFRGLQCRIEQEQKFSIIRNGQLIQLPVAEIVVGDIAQVKYGDLLPADGILIQGNDLKIDESSLTGESDHVKKSLDKDPMLLSGTHVMEGSGRMVVTAVGVNSQTGIILTLLGVNEDDEGEKKKKGKKQGVPENRNKAKTQDGVALEIQPLNSQEGIDNEEKDKKAVKVPKKEKSVLQGKLTRLAVQIGKAGLLMSALTVFILILYFVIDNFVINRRPWLPECTPIYIQYFVKFFIIGITVLVVAVPEGLPLAVTISLAYSVKKMMKDNNLVRHLDACETMGNATAICSDKTGTLTMNRMTVVQAYIGGIHYRQIPSPDVFLPKVLDLIVNGISINSAYTSKILPPEKEGGLPRQVGNKTECALLGFVTDLKQDYQAVRNEVPEEKLYKVYTFNSVRKSMSTVIRNPNGGFRMYSKGASEIILRKCNRILDRKGEAVPFKNKDRDDMVRTVIEPMACDGLRTICIAYRDFDDTEPSWDNENEILTELTCIAVVGIEDPVRPEVPDAIAKCKQAGITVRMVTGDNINTARAIATKCGILTPGDDFLCLEGKEFNRLIRNEKGEVEQEKLDKIWPKLRVLARSSPTDKHTLVKGIIDSTVGEHRQVVAVTGDGTNDGPALKKADVGFAMGIAGTDVAKEASDIILTDDNFTSIVKAVMWGRNVYDSISKFLQFQLTVNVVAVIVAFTGACITQDSPLKAVQMLWVNLIMDTFASLALATEPPTESLLKRRPYGRNKPLISRTMMKNILGHAFYQLIVIFILVFAGEKFFDIDSGRKAPLHSPPSQHYTIVFNTFVLMQLFNEINSRKIHGEKNVFSGIYRNIIFCSVVLGTFICQIFIVEFGGKPFSCTSLSLSQWLWCLFIGIGELLWGQFISAIPTRSLKFLKEAGHGTTKEEITKDAEGLDEIDHAEMELRRGQILWFRGLNRIQTQIDVINTFQTGASFKGVLRRQNMGQHLDVKLVPSSSYIKVVKAFHSSLHESIQKPYNQKSIHSFMTHPEFAIEEELPRTPLLDEEEEENPDKASKFGTRVLLLDGEVTPYANTNNNAVDCNQVQLPQSDSSLQSLETSV</sequence>
<proteinExistence type="evidence at protein level"/>
<dbReference type="EC" id="7.2.2.10" evidence="13"/>
<dbReference type="EMBL" id="M25874">
    <property type="protein sequence ID" value="AAA50819.1"/>
    <property type="molecule type" value="mRNA"/>
</dbReference>
<dbReference type="EMBL" id="M83363">
    <property type="protein sequence ID" value="AAA36455.1"/>
    <property type="molecule type" value="mRNA"/>
</dbReference>
<dbReference type="EMBL" id="BX537444">
    <property type="protein sequence ID" value="CAD97686.1"/>
    <property type="molecule type" value="mRNA"/>
</dbReference>
<dbReference type="EMBL" id="U42026">
    <property type="protein sequence ID" value="AAB17577.1"/>
    <property type="molecule type" value="mRNA"/>
</dbReference>
<dbReference type="EMBL" id="U42061">
    <property type="protein sequence ID" value="AAB17578.1"/>
    <property type="molecule type" value="mRNA"/>
</dbReference>
<dbReference type="EMBL" id="U42062">
    <property type="protein sequence ID" value="AAB17579.1"/>
    <property type="molecule type" value="mRNA"/>
</dbReference>
<dbReference type="EMBL" id="U42378">
    <property type="protein sequence ID" value="AAB17580.1"/>
    <property type="molecule type" value="mRNA"/>
</dbReference>
<dbReference type="EMBL" id="AC114402">
    <property type="status" value="NOT_ANNOTATED_CDS"/>
    <property type="molecule type" value="Genomic_DNA"/>
</dbReference>
<dbReference type="EMBL" id="AL513343">
    <property type="status" value="NOT_ANNOTATED_CDS"/>
    <property type="molecule type" value="Genomic_DNA"/>
</dbReference>
<dbReference type="EMBL" id="CH471067">
    <property type="protein sequence ID" value="EAW91483.1"/>
    <property type="molecule type" value="Genomic_DNA"/>
</dbReference>
<dbReference type="EMBL" id="CH471067">
    <property type="protein sequence ID" value="EAW91486.1"/>
    <property type="molecule type" value="Genomic_DNA"/>
</dbReference>
<dbReference type="EMBL" id="BC140774">
    <property type="protein sequence ID" value="AAI40775.1"/>
    <property type="molecule type" value="mRNA"/>
</dbReference>
<dbReference type="CCDS" id="CCDS1440.1">
    <molecule id="P23634-6"/>
</dbReference>
<dbReference type="CCDS" id="CCDS30977.1">
    <molecule id="P23634-2"/>
</dbReference>
<dbReference type="PIR" id="A35547">
    <property type="entry name" value="A35547"/>
</dbReference>
<dbReference type="RefSeq" id="NP_001001396.1">
    <molecule id="P23634-2"/>
    <property type="nucleotide sequence ID" value="NM_001001396.3"/>
</dbReference>
<dbReference type="RefSeq" id="NP_001675.3">
    <molecule id="P23634-6"/>
    <property type="nucleotide sequence ID" value="NM_001684.4"/>
</dbReference>
<dbReference type="PDB" id="1CFF">
    <property type="method" value="NMR"/>
    <property type="chains" value="B=1086-1104"/>
</dbReference>
<dbReference type="PDB" id="2KNE">
    <property type="method" value="NMR"/>
    <property type="chains" value="B=1086-1149"/>
</dbReference>
<dbReference type="PDBsum" id="1CFF"/>
<dbReference type="PDBsum" id="2KNE"/>
<dbReference type="SMR" id="P23634"/>
<dbReference type="BioGRID" id="106983">
    <property type="interactions" value="188"/>
</dbReference>
<dbReference type="DIP" id="DIP-6128N"/>
<dbReference type="ELM" id="P23634"/>
<dbReference type="FunCoup" id="P23634">
    <property type="interactions" value="1995"/>
</dbReference>
<dbReference type="IntAct" id="P23634">
    <property type="interactions" value="147"/>
</dbReference>
<dbReference type="MINT" id="P23634"/>
<dbReference type="STRING" id="9606.ENSP00000350310"/>
<dbReference type="DrugBank" id="DB01189">
    <property type="generic name" value="Desflurane"/>
</dbReference>
<dbReference type="DrugBank" id="DB01159">
    <property type="generic name" value="Halothane"/>
</dbReference>
<dbReference type="DrugBank" id="DB00867">
    <property type="generic name" value="Ritodrine"/>
</dbReference>
<dbReference type="DrugBank" id="DB01236">
    <property type="generic name" value="Sevoflurane"/>
</dbReference>
<dbReference type="TCDB" id="3.A.3.2.1">
    <property type="family name" value="the p-type atpase (p-atpase) superfamily"/>
</dbReference>
<dbReference type="GlyCosmos" id="P23634">
    <property type="glycosylation" value="1 site, 1 glycan"/>
</dbReference>
<dbReference type="GlyGen" id="P23634">
    <property type="glycosylation" value="2 sites, 1 O-linked glycan (2 sites)"/>
</dbReference>
<dbReference type="iPTMnet" id="P23634"/>
<dbReference type="MetOSite" id="P23634"/>
<dbReference type="PhosphoSitePlus" id="P23634"/>
<dbReference type="SwissPalm" id="P23634"/>
<dbReference type="BioMuta" id="ATP2B4"/>
<dbReference type="DMDM" id="14286105"/>
<dbReference type="jPOST" id="P23634"/>
<dbReference type="MassIVE" id="P23634"/>
<dbReference type="PaxDb" id="9606-ENSP00000350310"/>
<dbReference type="PeptideAtlas" id="P23634"/>
<dbReference type="ProteomicsDB" id="54137">
    <molecule id="P23634-1"/>
</dbReference>
<dbReference type="ProteomicsDB" id="54138">
    <molecule id="P23634-2"/>
</dbReference>
<dbReference type="ProteomicsDB" id="54139">
    <molecule id="P23634-3"/>
</dbReference>
<dbReference type="ProteomicsDB" id="54140">
    <molecule id="P23634-4"/>
</dbReference>
<dbReference type="ProteomicsDB" id="54141">
    <molecule id="P23634-5"/>
</dbReference>
<dbReference type="ProteomicsDB" id="54142">
    <molecule id="P23634-6"/>
</dbReference>
<dbReference type="ProteomicsDB" id="54143">
    <molecule id="P23634-7"/>
</dbReference>
<dbReference type="ProteomicsDB" id="54144">
    <molecule id="P23634-8"/>
</dbReference>
<dbReference type="Pumba" id="P23634"/>
<dbReference type="Antibodypedia" id="4241">
    <property type="antibodies" value="154 antibodies from 23 providers"/>
</dbReference>
<dbReference type="DNASU" id="493"/>
<dbReference type="Ensembl" id="ENST00000341360.7">
    <molecule id="P23634-2"/>
    <property type="protein sequence ID" value="ENSP00000340930.2"/>
    <property type="gene ID" value="ENSG00000058668.16"/>
</dbReference>
<dbReference type="Ensembl" id="ENST00000357681.10">
    <molecule id="P23634-6"/>
    <property type="protein sequence ID" value="ENSP00000350310.5"/>
    <property type="gene ID" value="ENSG00000058668.16"/>
</dbReference>
<dbReference type="Ensembl" id="ENST00000705901.1">
    <molecule id="P23634-3"/>
    <property type="protein sequence ID" value="ENSP00000516177.1"/>
    <property type="gene ID" value="ENSG00000058668.16"/>
</dbReference>
<dbReference type="GeneID" id="493"/>
<dbReference type="KEGG" id="hsa:493"/>
<dbReference type="MANE-Select" id="ENST00000357681.10">
    <molecule id="P23634-6"/>
    <property type="protein sequence ID" value="ENSP00000350310.5"/>
    <property type="RefSeq nucleotide sequence ID" value="NM_001684.5"/>
    <property type="RefSeq protein sequence ID" value="NP_001675.3"/>
</dbReference>
<dbReference type="UCSC" id="uc001gzv.4">
    <molecule id="P23634-1"/>
    <property type="organism name" value="human"/>
</dbReference>
<dbReference type="AGR" id="HGNC:817"/>
<dbReference type="CTD" id="493"/>
<dbReference type="DisGeNET" id="493"/>
<dbReference type="GeneCards" id="ATP2B4"/>
<dbReference type="HGNC" id="HGNC:817">
    <property type="gene designation" value="ATP2B4"/>
</dbReference>
<dbReference type="HPA" id="ENSG00000058668">
    <property type="expression patterns" value="Tissue enhanced (smooth)"/>
</dbReference>
<dbReference type="MalaCards" id="ATP2B4"/>
<dbReference type="MIM" id="108732">
    <property type="type" value="gene"/>
</dbReference>
<dbReference type="neXtProt" id="NX_P23634"/>
<dbReference type="OpenTargets" id="ENSG00000058668"/>
<dbReference type="PharmGKB" id="PA25110"/>
<dbReference type="VEuPathDB" id="HostDB:ENSG00000058668"/>
<dbReference type="eggNOG" id="KOG0204">
    <property type="taxonomic scope" value="Eukaryota"/>
</dbReference>
<dbReference type="GeneTree" id="ENSGT00940000154527"/>
<dbReference type="HOGENOM" id="CLU_002360_9_0_1"/>
<dbReference type="InParanoid" id="P23634"/>
<dbReference type="OMA" id="MINVHDI"/>
<dbReference type="OrthoDB" id="116380at2759"/>
<dbReference type="PAN-GO" id="P23634">
    <property type="GO annotations" value="5 GO annotations based on evolutionary models"/>
</dbReference>
<dbReference type="PhylomeDB" id="P23634"/>
<dbReference type="TreeFam" id="TF300330"/>
<dbReference type="PathwayCommons" id="P23634"/>
<dbReference type="Reactome" id="R-HSA-418359">
    <property type="pathway name" value="Reduction of cytosolic Ca++ levels"/>
</dbReference>
<dbReference type="Reactome" id="R-HSA-5578775">
    <property type="pathway name" value="Ion homeostasis"/>
</dbReference>
<dbReference type="Reactome" id="R-HSA-936837">
    <property type="pathway name" value="Ion transport by P-type ATPases"/>
</dbReference>
<dbReference type="SignaLink" id="P23634"/>
<dbReference type="SIGNOR" id="P23634"/>
<dbReference type="BioGRID-ORCS" id="493">
    <property type="hits" value="16 hits in 1155 CRISPR screens"/>
</dbReference>
<dbReference type="CD-CODE" id="91857CE7">
    <property type="entry name" value="Nucleolus"/>
</dbReference>
<dbReference type="CD-CODE" id="FB4E32DD">
    <property type="entry name" value="Presynaptic clusters and postsynaptic densities"/>
</dbReference>
<dbReference type="ChiTaRS" id="ATP2B4">
    <property type="organism name" value="human"/>
</dbReference>
<dbReference type="EvolutionaryTrace" id="P23634"/>
<dbReference type="GeneWiki" id="ATP2B4"/>
<dbReference type="GenomeRNAi" id="493"/>
<dbReference type="Pharos" id="P23634">
    <property type="development level" value="Tbio"/>
</dbReference>
<dbReference type="PRO" id="PR:P23634"/>
<dbReference type="Proteomes" id="UP000005640">
    <property type="component" value="Chromosome 1"/>
</dbReference>
<dbReference type="RNAct" id="P23634">
    <property type="molecule type" value="protein"/>
</dbReference>
<dbReference type="Bgee" id="ENSG00000058668">
    <property type="expression patterns" value="Expressed in saphenous vein and 213 other cell types or tissues"/>
</dbReference>
<dbReference type="ExpressionAtlas" id="P23634">
    <property type="expression patterns" value="baseline and differential"/>
</dbReference>
<dbReference type="GO" id="GO:0016323">
    <property type="term" value="C:basolateral plasma membrane"/>
    <property type="evidence" value="ECO:0007669"/>
    <property type="project" value="Ensembl"/>
</dbReference>
<dbReference type="GO" id="GO:0005901">
    <property type="term" value="C:caveola"/>
    <property type="evidence" value="ECO:0000304"/>
    <property type="project" value="BHF-UCL"/>
</dbReference>
<dbReference type="GO" id="GO:0036064">
    <property type="term" value="C:ciliary basal body"/>
    <property type="evidence" value="ECO:0000314"/>
    <property type="project" value="HPA"/>
</dbReference>
<dbReference type="GO" id="GO:0005929">
    <property type="term" value="C:cilium"/>
    <property type="evidence" value="ECO:0000314"/>
    <property type="project" value="HPA"/>
</dbReference>
<dbReference type="GO" id="GO:0098978">
    <property type="term" value="C:glutamatergic synapse"/>
    <property type="evidence" value="ECO:0007669"/>
    <property type="project" value="Ensembl"/>
</dbReference>
<dbReference type="GO" id="GO:0043231">
    <property type="term" value="C:intracellular membrane-bounded organelle"/>
    <property type="evidence" value="ECO:0000318"/>
    <property type="project" value="GO_Central"/>
</dbReference>
<dbReference type="GO" id="GO:0016020">
    <property type="term" value="C:membrane"/>
    <property type="evidence" value="ECO:0000314"/>
    <property type="project" value="ARUK-UCL"/>
</dbReference>
<dbReference type="GO" id="GO:0045121">
    <property type="term" value="C:membrane raft"/>
    <property type="evidence" value="ECO:0000314"/>
    <property type="project" value="ARUK-UCL"/>
</dbReference>
<dbReference type="GO" id="GO:0005739">
    <property type="term" value="C:mitochondrion"/>
    <property type="evidence" value="ECO:0000314"/>
    <property type="project" value="HPA"/>
</dbReference>
<dbReference type="GO" id="GO:0005886">
    <property type="term" value="C:plasma membrane"/>
    <property type="evidence" value="ECO:0000314"/>
    <property type="project" value="HPA"/>
</dbReference>
<dbReference type="GO" id="GO:0048787">
    <property type="term" value="C:presynaptic active zone membrane"/>
    <property type="evidence" value="ECO:0007669"/>
    <property type="project" value="Ensembl"/>
</dbReference>
<dbReference type="GO" id="GO:0032991">
    <property type="term" value="C:protein-containing complex"/>
    <property type="evidence" value="ECO:0000250"/>
    <property type="project" value="BHF-UCL"/>
</dbReference>
<dbReference type="GO" id="GO:0036126">
    <property type="term" value="C:sperm flagellum"/>
    <property type="evidence" value="ECO:0000250"/>
    <property type="project" value="UniProtKB"/>
</dbReference>
<dbReference type="GO" id="GO:0097228">
    <property type="term" value="C:sperm principal piece"/>
    <property type="evidence" value="ECO:0007669"/>
    <property type="project" value="Ensembl"/>
</dbReference>
<dbReference type="GO" id="GO:0030315">
    <property type="term" value="C:T-tubule"/>
    <property type="evidence" value="ECO:0000314"/>
    <property type="project" value="BHF-UCL"/>
</dbReference>
<dbReference type="GO" id="GO:0030018">
    <property type="term" value="C:Z disc"/>
    <property type="evidence" value="ECO:0000314"/>
    <property type="project" value="BHF-UCL"/>
</dbReference>
<dbReference type="GO" id="GO:0005524">
    <property type="term" value="F:ATP binding"/>
    <property type="evidence" value="ECO:0007669"/>
    <property type="project" value="UniProtKB-KW"/>
</dbReference>
<dbReference type="GO" id="GO:0016887">
    <property type="term" value="F:ATP hydrolysis activity"/>
    <property type="evidence" value="ECO:0007669"/>
    <property type="project" value="InterPro"/>
</dbReference>
<dbReference type="GO" id="GO:0015085">
    <property type="term" value="F:calcium ion transmembrane transporter activity"/>
    <property type="evidence" value="ECO:0000314"/>
    <property type="project" value="ARUK-UCL"/>
</dbReference>
<dbReference type="GO" id="GO:0005516">
    <property type="term" value="F:calmodulin binding"/>
    <property type="evidence" value="ECO:0000314"/>
    <property type="project" value="BHF-UCL"/>
</dbReference>
<dbReference type="GO" id="GO:0046872">
    <property type="term" value="F:metal ion binding"/>
    <property type="evidence" value="ECO:0007669"/>
    <property type="project" value="UniProtKB-KW"/>
</dbReference>
<dbReference type="GO" id="GO:0050998">
    <property type="term" value="F:nitric-oxide synthase binding"/>
    <property type="evidence" value="ECO:0000353"/>
    <property type="project" value="BHF-UCL"/>
</dbReference>
<dbReference type="GO" id="GO:0036487">
    <property type="term" value="F:nitric-oxide synthase inhibitor activity"/>
    <property type="evidence" value="ECO:0000314"/>
    <property type="project" value="BHF-UCL"/>
</dbReference>
<dbReference type="GO" id="GO:0005388">
    <property type="term" value="F:P-type calcium transporter activity"/>
    <property type="evidence" value="ECO:0000315"/>
    <property type="project" value="BHF-UCL"/>
</dbReference>
<dbReference type="GO" id="GO:0030165">
    <property type="term" value="F:PDZ domain binding"/>
    <property type="evidence" value="ECO:0007669"/>
    <property type="project" value="Ensembl"/>
</dbReference>
<dbReference type="GO" id="GO:0019901">
    <property type="term" value="F:protein kinase binding"/>
    <property type="evidence" value="ECO:0007669"/>
    <property type="project" value="Ensembl"/>
</dbReference>
<dbReference type="GO" id="GO:0030346">
    <property type="term" value="F:protein phosphatase 2B binding"/>
    <property type="evidence" value="ECO:0000314"/>
    <property type="project" value="BHF-UCL"/>
</dbReference>
<dbReference type="GO" id="GO:0097110">
    <property type="term" value="F:scaffold protein binding"/>
    <property type="evidence" value="ECO:0000250"/>
    <property type="project" value="BHF-UCL"/>
</dbReference>
<dbReference type="GO" id="GO:0017080">
    <property type="term" value="F:sodium channel regulator activity"/>
    <property type="evidence" value="ECO:0000250"/>
    <property type="project" value="BHF-UCL"/>
</dbReference>
<dbReference type="GO" id="GO:1901660">
    <property type="term" value="P:calcium ion export"/>
    <property type="evidence" value="ECO:0000314"/>
    <property type="project" value="ARUK-UCL"/>
</dbReference>
<dbReference type="GO" id="GO:0098703">
    <property type="term" value="P:calcium ion import across plasma membrane"/>
    <property type="evidence" value="ECO:0000305"/>
    <property type="project" value="BHF-UCL"/>
</dbReference>
<dbReference type="GO" id="GO:0097553">
    <property type="term" value="P:calcium ion transmembrane import into cytosol"/>
    <property type="evidence" value="ECO:0000305"/>
    <property type="project" value="BHF-UCL"/>
</dbReference>
<dbReference type="GO" id="GO:0070588">
    <property type="term" value="P:calcium ion transmembrane transport"/>
    <property type="evidence" value="ECO:0000315"/>
    <property type="project" value="BHF-UCL"/>
</dbReference>
<dbReference type="GO" id="GO:1905145">
    <property type="term" value="P:cellular response to acetylcholine"/>
    <property type="evidence" value="ECO:0000250"/>
    <property type="project" value="UniProtKB"/>
</dbReference>
<dbReference type="GO" id="GO:0071872">
    <property type="term" value="P:cellular response to epinephrine stimulus"/>
    <property type="evidence" value="ECO:0000314"/>
    <property type="project" value="BHF-UCL"/>
</dbReference>
<dbReference type="GO" id="GO:0030317">
    <property type="term" value="P:flagellated sperm motility"/>
    <property type="evidence" value="ECO:0000250"/>
    <property type="project" value="UniProtKB"/>
</dbReference>
<dbReference type="GO" id="GO:0021766">
    <property type="term" value="P:hippocampus development"/>
    <property type="evidence" value="ECO:0007669"/>
    <property type="project" value="Ensembl"/>
</dbReference>
<dbReference type="GO" id="GO:0006874">
    <property type="term" value="P:intracellular calcium ion homeostasis"/>
    <property type="evidence" value="ECO:0000314"/>
    <property type="project" value="BHF-UCL"/>
</dbReference>
<dbReference type="GO" id="GO:0034220">
    <property type="term" value="P:monoatomic ion transmembrane transport"/>
    <property type="evidence" value="ECO:0000304"/>
    <property type="project" value="Reactome"/>
</dbReference>
<dbReference type="GO" id="GO:0071878">
    <property type="term" value="P:negative regulation of adenylate cyclase-activating adrenergic receptor signaling pathway"/>
    <property type="evidence" value="ECO:0000314"/>
    <property type="project" value="BHF-UCL"/>
</dbReference>
<dbReference type="GO" id="GO:0016525">
    <property type="term" value="P:negative regulation of angiogenesis"/>
    <property type="evidence" value="ECO:0000314"/>
    <property type="project" value="ARUK-UCL"/>
</dbReference>
<dbReference type="GO" id="GO:1900082">
    <property type="term" value="P:negative regulation of arginine catabolic process"/>
    <property type="evidence" value="ECO:0000314"/>
    <property type="project" value="BHF-UCL"/>
</dbReference>
<dbReference type="GO" id="GO:0043537">
    <property type="term" value="P:negative regulation of blood vessel endothelial cell migration"/>
    <property type="evidence" value="ECO:0000314"/>
    <property type="project" value="ARUK-UCL"/>
</dbReference>
<dbReference type="GO" id="GO:0070885">
    <property type="term" value="P:negative regulation of calcineurin-NFAT signaling cascade"/>
    <property type="evidence" value="ECO:0000314"/>
    <property type="project" value="BHF-UCL"/>
</dbReference>
<dbReference type="GO" id="GO:1903243">
    <property type="term" value="P:negative regulation of cardiac muscle hypertrophy in response to stress"/>
    <property type="evidence" value="ECO:0000315"/>
    <property type="project" value="BHF-UCL"/>
</dbReference>
<dbReference type="GO" id="GO:1902548">
    <property type="term" value="P:negative regulation of cellular response to vascular endothelial growth factor stimulus"/>
    <property type="evidence" value="ECO:0000314"/>
    <property type="project" value="ARUK-UCL"/>
</dbReference>
<dbReference type="GO" id="GO:1903249">
    <property type="term" value="P:negative regulation of citrulline biosynthetic process"/>
    <property type="evidence" value="ECO:0000314"/>
    <property type="project" value="BHF-UCL"/>
</dbReference>
<dbReference type="GO" id="GO:0010629">
    <property type="term" value="P:negative regulation of gene expression"/>
    <property type="evidence" value="ECO:0000314"/>
    <property type="project" value="ARUK-UCL"/>
</dbReference>
<dbReference type="GO" id="GO:0045019">
    <property type="term" value="P:negative regulation of nitric oxide biosynthetic process"/>
    <property type="evidence" value="ECO:0000314"/>
    <property type="project" value="BHF-UCL"/>
</dbReference>
<dbReference type="GO" id="GO:0098736">
    <property type="term" value="P:negative regulation of the force of heart contraction"/>
    <property type="evidence" value="ECO:0000314"/>
    <property type="project" value="BHF-UCL"/>
</dbReference>
<dbReference type="GO" id="GO:0003407">
    <property type="term" value="P:neural retina development"/>
    <property type="evidence" value="ECO:0007669"/>
    <property type="project" value="Ensembl"/>
</dbReference>
<dbReference type="GO" id="GO:0038060">
    <property type="term" value="P:nitric oxide-cGMP-mediated signaling"/>
    <property type="evidence" value="ECO:0000314"/>
    <property type="project" value="BHF-UCL"/>
</dbReference>
<dbReference type="GO" id="GO:1903078">
    <property type="term" value="P:positive regulation of protein localization to plasma membrane"/>
    <property type="evidence" value="ECO:0000314"/>
    <property type="project" value="ARUK-UCL"/>
</dbReference>
<dbReference type="GO" id="GO:1903779">
    <property type="term" value="P:regulation of cardiac conduction"/>
    <property type="evidence" value="ECO:0000304"/>
    <property type="project" value="Reactome"/>
</dbReference>
<dbReference type="GO" id="GO:1902806">
    <property type="term" value="P:regulation of cell cycle G1/S phase transition"/>
    <property type="evidence" value="ECO:0000315"/>
    <property type="project" value="CACAO"/>
</dbReference>
<dbReference type="GO" id="GO:0051480">
    <property type="term" value="P:regulation of cytosolic calcium ion concentration"/>
    <property type="evidence" value="ECO:0000318"/>
    <property type="project" value="GO_Central"/>
</dbReference>
<dbReference type="GO" id="GO:1902305">
    <property type="term" value="P:regulation of sodium ion transmembrane transport"/>
    <property type="evidence" value="ECO:0000305"/>
    <property type="project" value="BHF-UCL"/>
</dbReference>
<dbReference type="GO" id="GO:0006357">
    <property type="term" value="P:regulation of transcription by RNA polymerase II"/>
    <property type="evidence" value="ECO:0000315"/>
    <property type="project" value="BHF-UCL"/>
</dbReference>
<dbReference type="GO" id="GO:0051599">
    <property type="term" value="P:response to hydrostatic pressure"/>
    <property type="evidence" value="ECO:0000315"/>
    <property type="project" value="BHF-UCL"/>
</dbReference>
<dbReference type="GO" id="GO:0007283">
    <property type="term" value="P:spermatogenesis"/>
    <property type="evidence" value="ECO:0007669"/>
    <property type="project" value="Ensembl"/>
</dbReference>
<dbReference type="GO" id="GO:0150104">
    <property type="term" value="P:transport across blood-brain barrier"/>
    <property type="evidence" value="ECO:0000303"/>
    <property type="project" value="ARUK-UCL"/>
</dbReference>
<dbReference type="GO" id="GO:0014832">
    <property type="term" value="P:urinary bladder smooth muscle contraction"/>
    <property type="evidence" value="ECO:0000250"/>
    <property type="project" value="UniProtKB"/>
</dbReference>
<dbReference type="CDD" id="cd02081">
    <property type="entry name" value="P-type_ATPase_Ca_PMCA-like"/>
    <property type="match status" value="1"/>
</dbReference>
<dbReference type="FunFam" id="1.20.1110.10:FF:000001">
    <property type="entry name" value="Calcium-transporting ATPase"/>
    <property type="match status" value="1"/>
</dbReference>
<dbReference type="FunFam" id="1.20.1110.10:FF:000002">
    <property type="entry name" value="Calcium-transporting ATPase"/>
    <property type="match status" value="1"/>
</dbReference>
<dbReference type="FunFam" id="1.20.1110.10:FF:000011">
    <property type="entry name" value="Calcium-transporting ATPase"/>
    <property type="match status" value="1"/>
</dbReference>
<dbReference type="FunFam" id="2.70.150.10:FF:000001">
    <property type="entry name" value="Calcium-transporting ATPase"/>
    <property type="match status" value="1"/>
</dbReference>
<dbReference type="FunFam" id="3.40.1110.10:FF:000032">
    <property type="entry name" value="Calcium-transporting ATPase"/>
    <property type="match status" value="1"/>
</dbReference>
<dbReference type="FunFam" id="3.40.50.1000:FF:000007">
    <property type="entry name" value="Calcium-transporting ATPase"/>
    <property type="match status" value="1"/>
</dbReference>
<dbReference type="Gene3D" id="3.40.1110.10">
    <property type="entry name" value="Calcium-transporting ATPase, cytoplasmic domain N"/>
    <property type="match status" value="1"/>
</dbReference>
<dbReference type="Gene3D" id="2.70.150.10">
    <property type="entry name" value="Calcium-transporting ATPase, cytoplasmic transduction domain A"/>
    <property type="match status" value="1"/>
</dbReference>
<dbReference type="Gene3D" id="1.20.1110.10">
    <property type="entry name" value="Calcium-transporting ATPase, transmembrane domain"/>
    <property type="match status" value="3"/>
</dbReference>
<dbReference type="Gene3D" id="3.40.50.1000">
    <property type="entry name" value="HAD superfamily/HAD-like"/>
    <property type="match status" value="1"/>
</dbReference>
<dbReference type="IDEAL" id="IID00510"/>
<dbReference type="InterPro" id="IPR022141">
    <property type="entry name" value="ATP_Ca_trans_C"/>
</dbReference>
<dbReference type="InterPro" id="IPR006068">
    <property type="entry name" value="ATPase_P-typ_cation-transptr_C"/>
</dbReference>
<dbReference type="InterPro" id="IPR004014">
    <property type="entry name" value="ATPase_P-typ_cation-transptr_N"/>
</dbReference>
<dbReference type="InterPro" id="IPR023299">
    <property type="entry name" value="ATPase_P-typ_cyto_dom_N"/>
</dbReference>
<dbReference type="InterPro" id="IPR018303">
    <property type="entry name" value="ATPase_P-typ_P_site"/>
</dbReference>
<dbReference type="InterPro" id="IPR023298">
    <property type="entry name" value="ATPase_P-typ_TM_dom_sf"/>
</dbReference>
<dbReference type="InterPro" id="IPR008250">
    <property type="entry name" value="ATPase_P-typ_transduc_dom_A_sf"/>
</dbReference>
<dbReference type="InterPro" id="IPR036412">
    <property type="entry name" value="HAD-like_sf"/>
</dbReference>
<dbReference type="InterPro" id="IPR023214">
    <property type="entry name" value="HAD_sf"/>
</dbReference>
<dbReference type="InterPro" id="IPR006408">
    <property type="entry name" value="P-type_ATPase_IIB"/>
</dbReference>
<dbReference type="InterPro" id="IPR001757">
    <property type="entry name" value="P_typ_ATPase"/>
</dbReference>
<dbReference type="InterPro" id="IPR044492">
    <property type="entry name" value="P_typ_ATPase_HD_dom"/>
</dbReference>
<dbReference type="NCBIfam" id="TIGR01517">
    <property type="entry name" value="ATPase-IIB_Ca"/>
    <property type="match status" value="1"/>
</dbReference>
<dbReference type="NCBIfam" id="TIGR01494">
    <property type="entry name" value="ATPase_P-type"/>
    <property type="match status" value="3"/>
</dbReference>
<dbReference type="PANTHER" id="PTHR24093">
    <property type="entry name" value="CATION TRANSPORTING ATPASE"/>
    <property type="match status" value="1"/>
</dbReference>
<dbReference type="PANTHER" id="PTHR24093:SF435">
    <property type="entry name" value="PLASMA MEMBRANE CALCIUM-TRANSPORTING ATPASE 4"/>
    <property type="match status" value="1"/>
</dbReference>
<dbReference type="Pfam" id="PF12424">
    <property type="entry name" value="ATP_Ca_trans_C"/>
    <property type="match status" value="2"/>
</dbReference>
<dbReference type="Pfam" id="PF13246">
    <property type="entry name" value="Cation_ATPase"/>
    <property type="match status" value="1"/>
</dbReference>
<dbReference type="Pfam" id="PF00689">
    <property type="entry name" value="Cation_ATPase_C"/>
    <property type="match status" value="1"/>
</dbReference>
<dbReference type="Pfam" id="PF00690">
    <property type="entry name" value="Cation_ATPase_N"/>
    <property type="match status" value="1"/>
</dbReference>
<dbReference type="Pfam" id="PF00122">
    <property type="entry name" value="E1-E2_ATPase"/>
    <property type="match status" value="2"/>
</dbReference>
<dbReference type="Pfam" id="PF00702">
    <property type="entry name" value="Hydrolase"/>
    <property type="match status" value="1"/>
</dbReference>
<dbReference type="PRINTS" id="PR00119">
    <property type="entry name" value="CATATPASE"/>
</dbReference>
<dbReference type="SFLD" id="SFLDG00002">
    <property type="entry name" value="C1.7:_P-type_atpase_like"/>
    <property type="match status" value="1"/>
</dbReference>
<dbReference type="SFLD" id="SFLDF00027">
    <property type="entry name" value="p-type_atpase"/>
    <property type="match status" value="1"/>
</dbReference>
<dbReference type="SMART" id="SM00831">
    <property type="entry name" value="Cation_ATPase_N"/>
    <property type="match status" value="1"/>
</dbReference>
<dbReference type="SUPFAM" id="SSF81653">
    <property type="entry name" value="Calcium ATPase, transduction domain A"/>
    <property type="match status" value="1"/>
</dbReference>
<dbReference type="SUPFAM" id="SSF81665">
    <property type="entry name" value="Calcium ATPase, transmembrane domain M"/>
    <property type="match status" value="1"/>
</dbReference>
<dbReference type="SUPFAM" id="SSF56784">
    <property type="entry name" value="HAD-like"/>
    <property type="match status" value="1"/>
</dbReference>
<dbReference type="SUPFAM" id="SSF81660">
    <property type="entry name" value="Metal cation-transporting ATPase, ATP-binding domain N"/>
    <property type="match status" value="1"/>
</dbReference>
<dbReference type="PROSITE" id="PS00154">
    <property type="entry name" value="ATPASE_E1_E2"/>
    <property type="match status" value="1"/>
</dbReference>
<reference key="1">
    <citation type="journal article" date="1990" name="J. Biol. Chem.">
        <title>Peptide sequence analysis and molecular cloning reveal two calcium pump isoforms in the human erythrocyte membrane.</title>
        <authorList>
            <person name="Strehler E.E."/>
            <person name="James P."/>
            <person name="Fischer R."/>
            <person name="Heim R."/>
            <person name="Vorherr T.E."/>
            <person name="Filoteo A.G."/>
            <person name="Penniston J.T."/>
            <person name="Carafoli E."/>
        </authorList>
    </citation>
    <scope>NUCLEOTIDE SEQUENCE [MRNA] (ISOFORM XB)</scope>
    <scope>PARTIAL PROTEIN SEQUENCE</scope>
    <scope>SUBCELLULAR LOCATION</scope>
    <source>
        <tissue>Erythrocyte</tissue>
    </source>
</reference>
<reference key="2">
    <citation type="journal article" date="1992" name="J. Biol. Chem.">
        <title>Analysis of the tissue-specific distribution of mRNAs encoding the plasma membrane calcium-pumping ATPases and characterization of an alternately spliced form of PMCA4 at the cDNA and genomic levels.</title>
        <authorList>
            <person name="Brandt P."/>
            <person name="Neve R.L."/>
            <person name="Kammesheidt A."/>
            <person name="Rhoads R.E."/>
            <person name="Vanaman T.C."/>
        </authorList>
    </citation>
    <scope>NUCLEOTIDE SEQUENCE [MRNA] (ISOFORM XA)</scope>
    <scope>TISSUE SPECIFICITY</scope>
    <source>
        <tissue>Fetal brain</tissue>
    </source>
</reference>
<reference key="3">
    <citation type="journal article" date="2007" name="BMC Genomics">
        <title>The full-ORF clone resource of the German cDNA consortium.</title>
        <authorList>
            <person name="Bechtel S."/>
            <person name="Rosenfelder H."/>
            <person name="Duda A."/>
            <person name="Schmidt C.P."/>
            <person name="Ernst U."/>
            <person name="Wellenreuther R."/>
            <person name="Mehrle A."/>
            <person name="Schuster C."/>
            <person name="Bahr A."/>
            <person name="Bloecker H."/>
            <person name="Heubner D."/>
            <person name="Hoerlein A."/>
            <person name="Michel G."/>
            <person name="Wedler H."/>
            <person name="Koehrer K."/>
            <person name="Ottenwaelder B."/>
            <person name="Poustka A."/>
            <person name="Wiemann S."/>
            <person name="Schupp I."/>
        </authorList>
    </citation>
    <scope>NUCLEOTIDE SEQUENCE [LARGE SCALE MRNA] (ISOFORM XB)</scope>
    <source>
        <tissue>Fetal kidney</tissue>
    </source>
</reference>
<reference key="4">
    <citation type="journal article" date="2006" name="Nature">
        <title>The DNA sequence and biological annotation of human chromosome 1.</title>
        <authorList>
            <person name="Gregory S.G."/>
            <person name="Barlow K.F."/>
            <person name="McLay K.E."/>
            <person name="Kaul R."/>
            <person name="Swarbreck D."/>
            <person name="Dunham A."/>
            <person name="Scott C.E."/>
            <person name="Howe K.L."/>
            <person name="Woodfine K."/>
            <person name="Spencer C.C.A."/>
            <person name="Jones M.C."/>
            <person name="Gillson C."/>
            <person name="Searle S."/>
            <person name="Zhou Y."/>
            <person name="Kokocinski F."/>
            <person name="McDonald L."/>
            <person name="Evans R."/>
            <person name="Phillips K."/>
            <person name="Atkinson A."/>
            <person name="Cooper R."/>
            <person name="Jones C."/>
            <person name="Hall R.E."/>
            <person name="Andrews T.D."/>
            <person name="Lloyd C."/>
            <person name="Ainscough R."/>
            <person name="Almeida J.P."/>
            <person name="Ambrose K.D."/>
            <person name="Anderson F."/>
            <person name="Andrew R.W."/>
            <person name="Ashwell R.I.S."/>
            <person name="Aubin K."/>
            <person name="Babbage A.K."/>
            <person name="Bagguley C.L."/>
            <person name="Bailey J."/>
            <person name="Beasley H."/>
            <person name="Bethel G."/>
            <person name="Bird C.P."/>
            <person name="Bray-Allen S."/>
            <person name="Brown J.Y."/>
            <person name="Brown A.J."/>
            <person name="Buckley D."/>
            <person name="Burton J."/>
            <person name="Bye J."/>
            <person name="Carder C."/>
            <person name="Chapman J.C."/>
            <person name="Clark S.Y."/>
            <person name="Clarke G."/>
            <person name="Clee C."/>
            <person name="Cobley V."/>
            <person name="Collier R.E."/>
            <person name="Corby N."/>
            <person name="Coville G.J."/>
            <person name="Davies J."/>
            <person name="Deadman R."/>
            <person name="Dunn M."/>
            <person name="Earthrowl M."/>
            <person name="Ellington A.G."/>
            <person name="Errington H."/>
            <person name="Frankish A."/>
            <person name="Frankland J."/>
            <person name="French L."/>
            <person name="Garner P."/>
            <person name="Garnett J."/>
            <person name="Gay L."/>
            <person name="Ghori M.R.J."/>
            <person name="Gibson R."/>
            <person name="Gilby L.M."/>
            <person name="Gillett W."/>
            <person name="Glithero R.J."/>
            <person name="Grafham D.V."/>
            <person name="Griffiths C."/>
            <person name="Griffiths-Jones S."/>
            <person name="Grocock R."/>
            <person name="Hammond S."/>
            <person name="Harrison E.S.I."/>
            <person name="Hart E."/>
            <person name="Haugen E."/>
            <person name="Heath P.D."/>
            <person name="Holmes S."/>
            <person name="Holt K."/>
            <person name="Howden P.J."/>
            <person name="Hunt A.R."/>
            <person name="Hunt S.E."/>
            <person name="Hunter G."/>
            <person name="Isherwood J."/>
            <person name="James R."/>
            <person name="Johnson C."/>
            <person name="Johnson D."/>
            <person name="Joy A."/>
            <person name="Kay M."/>
            <person name="Kershaw J.K."/>
            <person name="Kibukawa M."/>
            <person name="Kimberley A.M."/>
            <person name="King A."/>
            <person name="Knights A.J."/>
            <person name="Lad H."/>
            <person name="Laird G."/>
            <person name="Lawlor S."/>
            <person name="Leongamornlert D.A."/>
            <person name="Lloyd D.M."/>
            <person name="Loveland J."/>
            <person name="Lovell J."/>
            <person name="Lush M.J."/>
            <person name="Lyne R."/>
            <person name="Martin S."/>
            <person name="Mashreghi-Mohammadi M."/>
            <person name="Matthews L."/>
            <person name="Matthews N.S.W."/>
            <person name="McLaren S."/>
            <person name="Milne S."/>
            <person name="Mistry S."/>
            <person name="Moore M.J.F."/>
            <person name="Nickerson T."/>
            <person name="O'Dell C.N."/>
            <person name="Oliver K."/>
            <person name="Palmeiri A."/>
            <person name="Palmer S.A."/>
            <person name="Parker A."/>
            <person name="Patel D."/>
            <person name="Pearce A.V."/>
            <person name="Peck A.I."/>
            <person name="Pelan S."/>
            <person name="Phelps K."/>
            <person name="Phillimore B.J."/>
            <person name="Plumb R."/>
            <person name="Rajan J."/>
            <person name="Raymond C."/>
            <person name="Rouse G."/>
            <person name="Saenphimmachak C."/>
            <person name="Sehra H.K."/>
            <person name="Sheridan E."/>
            <person name="Shownkeen R."/>
            <person name="Sims S."/>
            <person name="Skuce C.D."/>
            <person name="Smith M."/>
            <person name="Steward C."/>
            <person name="Subramanian S."/>
            <person name="Sycamore N."/>
            <person name="Tracey A."/>
            <person name="Tromans A."/>
            <person name="Van Helmond Z."/>
            <person name="Wall M."/>
            <person name="Wallis J.M."/>
            <person name="White S."/>
            <person name="Whitehead S.L."/>
            <person name="Wilkinson J.E."/>
            <person name="Willey D.L."/>
            <person name="Williams H."/>
            <person name="Wilming L."/>
            <person name="Wray P.W."/>
            <person name="Wu Z."/>
            <person name="Coulson A."/>
            <person name="Vaudin M."/>
            <person name="Sulston J.E."/>
            <person name="Durbin R.M."/>
            <person name="Hubbard T."/>
            <person name="Wooster R."/>
            <person name="Dunham I."/>
            <person name="Carter N.P."/>
            <person name="McVean G."/>
            <person name="Ross M.T."/>
            <person name="Harrow J."/>
            <person name="Olson M.V."/>
            <person name="Beck S."/>
            <person name="Rogers J."/>
            <person name="Bentley D.R."/>
        </authorList>
    </citation>
    <scope>NUCLEOTIDE SEQUENCE [LARGE SCALE GENOMIC DNA]</scope>
</reference>
<reference key="5">
    <citation type="submission" date="2005-07" db="EMBL/GenBank/DDBJ databases">
        <authorList>
            <person name="Mural R.J."/>
            <person name="Istrail S."/>
            <person name="Sutton G.G."/>
            <person name="Florea L."/>
            <person name="Halpern A.L."/>
            <person name="Mobarry C.M."/>
            <person name="Lippert R."/>
            <person name="Walenz B."/>
            <person name="Shatkay H."/>
            <person name="Dew I."/>
            <person name="Miller J.R."/>
            <person name="Flanigan M.J."/>
            <person name="Edwards N.J."/>
            <person name="Bolanos R."/>
            <person name="Fasulo D."/>
            <person name="Halldorsson B.V."/>
            <person name="Hannenhalli S."/>
            <person name="Turner R."/>
            <person name="Yooseph S."/>
            <person name="Lu F."/>
            <person name="Nusskern D.R."/>
            <person name="Shue B.C."/>
            <person name="Zheng X.H."/>
            <person name="Zhong F."/>
            <person name="Delcher A.L."/>
            <person name="Huson D.H."/>
            <person name="Kravitz S.A."/>
            <person name="Mouchard L."/>
            <person name="Reinert K."/>
            <person name="Remington K.A."/>
            <person name="Clark A.G."/>
            <person name="Waterman M.S."/>
            <person name="Eichler E.E."/>
            <person name="Adams M.D."/>
            <person name="Hunkapiller M.W."/>
            <person name="Myers E.W."/>
            <person name="Venter J.C."/>
        </authorList>
    </citation>
    <scope>NUCLEOTIDE SEQUENCE [LARGE SCALE GENOMIC DNA]</scope>
</reference>
<reference key="6">
    <citation type="journal article" date="2004" name="Genome Res.">
        <title>The status, quality, and expansion of the NIH full-length cDNA project: the Mammalian Gene Collection (MGC).</title>
        <authorList>
            <consortium name="The MGC Project Team"/>
        </authorList>
    </citation>
    <scope>NUCLEOTIDE SEQUENCE [LARGE SCALE MRNA] (ISOFORM XA)</scope>
    <source>
        <tissue>Brain</tissue>
    </source>
</reference>
<reference key="7">
    <citation type="journal article" date="1996" name="Mol. Cell. Biochem.">
        <title>Analysis of mRNA expression and cloning of a novel plasma membrane Ca(2+)-ATPase splice variant in human heart.</title>
        <authorList>
            <person name="Santiago-Garcia J."/>
            <person name="Mas-Oliva J."/>
            <person name="Saavedra D."/>
            <person name="Zarain-Herzberg A."/>
        </authorList>
    </citation>
    <scope>PARTIAL NUCLEOTIDE SEQUENCE [MRNA] (ISOFORMS XA; XB; XK; ZA; ZB AND ZK)</scope>
    <source>
        <tissue>Heart muscle</tissue>
    </source>
</reference>
<reference key="8">
    <citation type="journal article" date="1988" name="J. Biol. Chem.">
        <title>Identification and primary structure of a calmodulin binding domain of the Ca2+ pump of human erythrocytes.</title>
        <authorList>
            <person name="James P."/>
            <person name="Maeda M."/>
            <person name="Fischer R."/>
            <person name="Verma A.K."/>
            <person name="Krebs J."/>
            <person name="Penniston J.T."/>
            <person name="Carafoli E."/>
        </authorList>
    </citation>
    <scope>PROTEIN SEQUENCE OF 1085-1153 (ISOFORMS XB/ZB)</scope>
    <scope>CALMODULIN-BINDING SUBDOMAIN A</scope>
</reference>
<reference key="9">
    <citation type="journal article" date="1988" name="Proc. Natl. Acad. Sci. U.S.A.">
        <title>A C-terminal, calmodulin-like regulatory domain from the plasma membrane Ca2+-pumping ATPase.</title>
        <authorList>
            <person name="Brandt P."/>
            <person name="Zurini M."/>
            <person name="Neve R.L."/>
            <person name="Rhoads R.E."/>
            <person name="Vanaman T.C."/>
        </authorList>
    </citation>
    <scope>PROTEIN SEQUENCE OF 1177-1190</scope>
</reference>
<reference key="10">
    <citation type="journal article" date="1993" name="J. Biol. Chem.">
        <title>Quantitative analysis of alternative splicing options of human plasma membrane calcium pump genes.</title>
        <authorList>
            <person name="Stauffer T.P."/>
            <person name="Hilfiker H."/>
            <person name="Carafoli E."/>
            <person name="Strehler E.E."/>
        </authorList>
    </citation>
    <scope>ALTERNATIVE SPLICING (ISOFORMS X AND Z)</scope>
    <source>
        <tissue>Heart</tissue>
    </source>
</reference>
<reference key="11">
    <citation type="journal article" date="1994" name="J. Biol. Chem.">
        <authorList>
            <person name="Stauffer T.P."/>
            <person name="Hilfiker H."/>
            <person name="Carafoli E."/>
            <person name="Strehler E.E."/>
        </authorList>
    </citation>
    <scope>ERRATUM OF PUBMED:8245032</scope>
</reference>
<reference key="12">
    <citation type="journal article" date="1995" name="J. Biol. Chem.">
        <title>Mutants in the putative nucleotide-binding region of the plasma membrane Ca(2+)-pump. A reduction in activity due to slow dephosphorylation.</title>
        <authorList>
            <person name="Adamo H.P."/>
            <person name="Filoteo A.G."/>
            <person name="Enyedi A."/>
            <person name="Penniston J.T."/>
        </authorList>
    </citation>
    <scope>FUNCTION</scope>
    <scope>CATALYTIC ACTIVITY</scope>
    <scope>ACTIVITY REGULATION</scope>
    <scope>MUTAGENESIS OF ASP-672; VAL-674; ARG-675; LYS-686 AND ARG-693</scope>
</reference>
<reference key="13">
    <citation type="journal article" date="2003" name="Ann. N. Y. Acad. Sci.">
        <title>Characterization of PISP, a novel single-PDZ protein that binds to all plasma membrane Ca2+-ATPase b-splice variants.</title>
        <authorList>
            <person name="Goellner G.M."/>
            <person name="DeMarco S.J."/>
            <person name="Strehler E.E."/>
        </authorList>
    </citation>
    <scope>INTERACTION WITH PDZD11</scope>
</reference>
<reference key="14">
    <citation type="journal article" date="2011" name="BMC Syst. Biol.">
        <title>Initial characterization of the human central proteome.</title>
        <authorList>
            <person name="Burkard T.R."/>
            <person name="Planyavsky M."/>
            <person name="Kaupe I."/>
            <person name="Breitwieser F.P."/>
            <person name="Buerckstuemmer T."/>
            <person name="Bennett K.L."/>
            <person name="Superti-Furga G."/>
            <person name="Colinge J."/>
        </authorList>
    </citation>
    <scope>IDENTIFICATION BY MASS SPECTROMETRY [LARGE SCALE ANALYSIS]</scope>
</reference>
<reference key="15">
    <citation type="journal article" date="2011" name="Proc. Natl. Acad. Sci. U.S.A.">
        <title>POST, partner of stromal interaction molecule 1 (STIM1), targets STIM1 to multiple transporters.</title>
        <authorList>
            <person name="Krapivinsky G."/>
            <person name="Krapivinsky L."/>
            <person name="Stotz S.C."/>
            <person name="Manasian Y."/>
            <person name="Clapham D.E."/>
        </authorList>
    </citation>
    <scope>INTERACTION WITH SLC35G1 AND STIM1</scope>
</reference>
<reference key="16">
    <citation type="journal article" date="2013" name="J. Proteome Res.">
        <title>Toward a comprehensive characterization of a human cancer cell phosphoproteome.</title>
        <authorList>
            <person name="Zhou H."/>
            <person name="Di Palma S."/>
            <person name="Preisinger C."/>
            <person name="Peng M."/>
            <person name="Polat A.N."/>
            <person name="Heck A.J."/>
            <person name="Mohammed S."/>
        </authorList>
    </citation>
    <scope>PHOSPHORYLATION [LARGE SCALE ANALYSIS] AT SER-13 AND SER-328</scope>
    <scope>IDENTIFICATION BY MASS SPECTROMETRY [LARGE SCALE ANALYSIS]</scope>
    <source>
        <tissue>Cervix carcinoma</tissue>
        <tissue>Erythroleukemia</tissue>
    </source>
</reference>
<reference key="17">
    <citation type="journal article" date="2014" name="J. Proteomics">
        <title>An enzyme assisted RP-RPLC approach for in-depth analysis of human liver phosphoproteome.</title>
        <authorList>
            <person name="Bian Y."/>
            <person name="Song C."/>
            <person name="Cheng K."/>
            <person name="Dong M."/>
            <person name="Wang F."/>
            <person name="Huang J."/>
            <person name="Sun D."/>
            <person name="Wang L."/>
            <person name="Ye M."/>
            <person name="Zou H."/>
        </authorList>
    </citation>
    <scope>PHOSPHORYLATION [LARGE SCALE ANALYSIS] AT SER-13</scope>
    <scope>IDENTIFICATION BY MASS SPECTROMETRY [LARGE SCALE ANALYSIS]</scope>
    <source>
        <tissue>Liver</tissue>
    </source>
</reference>
<reference key="18">
    <citation type="journal article" date="2015" name="Proteomics">
        <title>N-terminome analysis of the human mitochondrial proteome.</title>
        <authorList>
            <person name="Vaca Jacome A.S."/>
            <person name="Rabilloud T."/>
            <person name="Schaeffer-Reiss C."/>
            <person name="Rompais M."/>
            <person name="Ayoub D."/>
            <person name="Lane L."/>
            <person name="Bairoch A."/>
            <person name="Van Dorsselaer A."/>
            <person name="Carapito C."/>
        </authorList>
    </citation>
    <scope>IDENTIFICATION BY MASS SPECTROMETRY [LARGE SCALE ANALYSIS]</scope>
</reference>
<reference key="19">
    <citation type="journal article" date="1999" name="Biochemistry">
        <title>NMR solution structure of a complex of calmodulin with a binding peptide of the Ca(2+) pump.</title>
        <authorList>
            <person name="Elshorst B."/>
            <person name="Hennig M."/>
            <person name="Foersterling H."/>
            <person name="Diener A."/>
            <person name="Maurer M."/>
            <person name="Schulte P."/>
            <person name="Schwalbe H."/>
            <person name="Griesinger C."/>
            <person name="Krebs J."/>
            <person name="Schmid H."/>
            <person name="Vorherr T.E."/>
            <person name="Carafoli E."/>
        </authorList>
    </citation>
    <scope>STRUCTURE BY NMR OF 1086-1104 IN COMPLEX WITH CALMODULIN</scope>
</reference>
<gene>
    <name evidence="20" type="primary">ATP2B4</name>
    <name type="synonym">ATP2B2</name>
    <name type="synonym">MXRA1</name>
</gene>
<accession>P23634</accession>
<accession>B1APW5</accession>
<accession>B1APW6</accession>
<accession>Q13450</accession>
<accession>Q13452</accession>
<accession>Q13455</accession>
<accession>Q16817</accession>
<accession>Q7Z3S1</accession>
<evidence type="ECO:0000250" key="1"/>
<evidence type="ECO:0000250" key="2">
    <source>
        <dbReference type="UniProtKB" id="P19156"/>
    </source>
</evidence>
<evidence type="ECO:0000250" key="3">
    <source>
        <dbReference type="UniProtKB" id="P20020"/>
    </source>
</evidence>
<evidence type="ECO:0000250" key="4">
    <source>
        <dbReference type="UniProtKB" id="Q6Q477"/>
    </source>
</evidence>
<evidence type="ECO:0000255" key="5"/>
<evidence type="ECO:0000256" key="6">
    <source>
        <dbReference type="SAM" id="MobiDB-lite"/>
    </source>
</evidence>
<evidence type="ECO:0000269" key="7">
    <source>
    </source>
</evidence>
<evidence type="ECO:0000269" key="8">
    <source>
    </source>
</evidence>
<evidence type="ECO:0000269" key="9">
    <source>
    </source>
</evidence>
<evidence type="ECO:0000269" key="10">
    <source>
    </source>
</evidence>
<evidence type="ECO:0000269" key="11">
    <source>
    </source>
</evidence>
<evidence type="ECO:0000269" key="12">
    <source>
    </source>
</evidence>
<evidence type="ECO:0000269" key="13">
    <source>
    </source>
</evidence>
<evidence type="ECO:0000303" key="14">
    <source>
    </source>
</evidence>
<evidence type="ECO:0000303" key="15">
    <source>
    </source>
</evidence>
<evidence type="ECO:0000303" key="16">
    <source>
    </source>
</evidence>
<evidence type="ECO:0000303" key="17">
    <source>
    </source>
</evidence>
<evidence type="ECO:0000305" key="18"/>
<evidence type="ECO:0000312" key="19">
    <source>
        <dbReference type="EMBL" id="AAA50819.1"/>
    </source>
</evidence>
<evidence type="ECO:0000312" key="20">
    <source>
        <dbReference type="HGNC" id="HGNC:817"/>
    </source>
</evidence>
<evidence type="ECO:0007744" key="21">
    <source>
    </source>
</evidence>
<evidence type="ECO:0007744" key="22">
    <source>
    </source>
</evidence>
<evidence type="ECO:0007829" key="23">
    <source>
        <dbReference type="PDB" id="1CFF"/>
    </source>
</evidence>
<evidence type="ECO:0007829" key="24">
    <source>
        <dbReference type="PDB" id="2KNE"/>
    </source>
</evidence>
<comment type="function">
    <text evidence="4 13">Calcium/calmodulin-regulated and magnesium-dependent enzyme that catalyzes the hydrolysis of ATP coupled with the transport of calcium out of the cell (PubMed:8530416). By regulating sperm cell calcium homeostasis, may play a role in sperm motility (By similarity).</text>
</comment>
<comment type="catalytic activity">
    <reaction evidence="13">
        <text>Ca(2+)(in) + ATP + H2O = Ca(2+)(out) + ADP + phosphate + H(+)</text>
        <dbReference type="Rhea" id="RHEA:18105"/>
        <dbReference type="ChEBI" id="CHEBI:15377"/>
        <dbReference type="ChEBI" id="CHEBI:15378"/>
        <dbReference type="ChEBI" id="CHEBI:29108"/>
        <dbReference type="ChEBI" id="CHEBI:30616"/>
        <dbReference type="ChEBI" id="CHEBI:43474"/>
        <dbReference type="ChEBI" id="CHEBI:456216"/>
        <dbReference type="EC" id="7.2.2.10"/>
    </reaction>
</comment>
<comment type="activity regulation">
    <text evidence="13">Activated by calcium/calmodulin.</text>
</comment>
<comment type="subunit">
    <text evidence="7 8 11 12">Interacts with PDZD11 (PubMed:12763866). Interacts with SLC35G1 and STIM1 (PubMed:22084111). Interacts with calmodulin (PubMed:10493800, PubMed:2963820).</text>
</comment>
<comment type="interaction">
    <interactant intactId="EBI-1174388">
        <id>P23634</id>
    </interactant>
    <interactant intactId="EBI-1018474">
        <id>P01258</id>
        <label>CALCA</label>
    </interactant>
    <organismsDiffer>false</organismsDiffer>
    <experiments>2</experiments>
</comment>
<comment type="interaction">
    <interactant intactId="EBI-1174388">
        <id>P23634</id>
    </interactant>
    <interactant intactId="EBI-3386081">
        <id>Q5VYX0</id>
        <label>RNLS</label>
    </interactant>
    <organismsDiffer>false</organismsDiffer>
    <experiments>3</experiments>
</comment>
<comment type="interaction">
    <interactant intactId="EBI-1174388">
        <id>P23634</id>
    </interactant>
    <interactant intactId="EBI-21852300">
        <id>Q9NYW3</id>
        <label>TAS2R7</label>
    </interactant>
    <organismsDiffer>false</organismsDiffer>
    <experiments>2</experiments>
</comment>
<comment type="interaction">
    <interactant intactId="EBI-1174437">
        <id>P23634-6</id>
    </interactant>
    <interactant intactId="EBI-396947">
        <id>Q63622</id>
        <label>Dlg2</label>
    </interactant>
    <organismsDiffer>true</organismsDiffer>
    <experiments>2</experiments>
</comment>
<comment type="interaction">
    <interactant intactId="EBI-1174437">
        <id>P23634-6</id>
    </interactant>
    <interactant intactId="EBI-349596">
        <id>Q62936</id>
        <label>Dlg3</label>
    </interactant>
    <organismsDiffer>true</organismsDiffer>
    <experiments>2</experiments>
</comment>
<comment type="subcellular location">
    <subcellularLocation>
        <location evidence="10">Cell membrane</location>
        <topology evidence="5">Multi-pass membrane protein</topology>
    </subcellularLocation>
    <subcellularLocation>
        <location evidence="4">Cell projection</location>
        <location evidence="4">Cilium</location>
        <location evidence="4">Flagellum membrane</location>
        <topology evidence="5">Multi-pass membrane protein</topology>
    </subcellularLocation>
</comment>
<comment type="alternative products">
    <event type="alternative splicing"/>
    <isoform>
        <id>P23634-1</id>
        <name>XD</name>
        <name>AIICIV</name>
        <sequence type="displayed"/>
    </isoform>
    <isoform>
        <id>P23634-2</id>
        <name>XA</name>
        <name>AIICII</name>
        <sequence type="described" ref="VSP_000405"/>
    </isoform>
    <isoform>
        <id>P23634-3</id>
        <name>ZA</name>
        <name>AICII</name>
        <sequence type="described" ref="VSP_000402 VSP_000405"/>
    </isoform>
    <isoform>
        <id>P23634-4</id>
        <name>XK</name>
        <name>XG</name>
        <sequence type="described" ref="VSP_000403 VSP_000405"/>
    </isoform>
    <isoform>
        <id>P23634-5</id>
        <name>ZK</name>
        <name>ZG</name>
        <sequence type="described" ref="VSP_000402 VSP_000403 VSP_000405"/>
    </isoform>
    <isoform>
        <id>P23634-6</id>
        <name>XB</name>
        <name>AIICI</name>
        <name>hPMCA4b</name>
        <sequence type="described" ref="VSP_000404"/>
    </isoform>
    <isoform>
        <id>P23634-7</id>
        <name>ZB</name>
        <name>AICI</name>
        <sequence type="described" ref="VSP_000402 VSP_000404"/>
    </isoform>
    <isoform>
        <id>P23634-8</id>
        <name>ZD</name>
        <name>AICIV</name>
        <sequence type="described" ref="VSP_000402"/>
    </isoform>
    <text>There is a combination of two alternatively spliced domains at N-terminal site A (X and Z) and at C-terminal site B/C (A, B, D and K). The splice sites have mostly been studied independently. Full isoforms so far detected are isoform XA and isoform XB. Experimental confirmation may be lacking for some isoforms.</text>
</comment>
<comment type="tissue specificity">
    <text evidence="9">Isoform XB is the most abundant isoform and is expressed ubiquitously. Isoforms containing segment Z have only been detected in heart, while isoforms containing segment a have been found in heart, stomach and brain cortex.</text>
</comment>
<comment type="similarity">
    <text evidence="18">Belongs to the cation transport ATPase (P-type) (TC 3.A.3) family. Type IIB subfamily.</text>
</comment>
<keyword id="KW-0002">3D-structure</keyword>
<keyword id="KW-0025">Alternative splicing</keyword>
<keyword id="KW-0067">ATP-binding</keyword>
<keyword id="KW-0106">Calcium</keyword>
<keyword id="KW-0109">Calcium transport</keyword>
<keyword id="KW-0112">Calmodulin-binding</keyword>
<keyword id="KW-1003">Cell membrane</keyword>
<keyword id="KW-0966">Cell projection</keyword>
<keyword id="KW-0969">Cilium</keyword>
<keyword id="KW-0903">Direct protein sequencing</keyword>
<keyword id="KW-0282">Flagellum</keyword>
<keyword id="KW-0406">Ion transport</keyword>
<keyword id="KW-0460">Magnesium</keyword>
<keyword id="KW-0472">Membrane</keyword>
<keyword id="KW-0479">Metal-binding</keyword>
<keyword id="KW-0547">Nucleotide-binding</keyword>
<keyword id="KW-0597">Phosphoprotein</keyword>
<keyword id="KW-1267">Proteomics identification</keyword>
<keyword id="KW-1185">Reference proteome</keyword>
<keyword id="KW-1278">Translocase</keyword>
<keyword id="KW-0812">Transmembrane</keyword>
<keyword id="KW-1133">Transmembrane helix</keyword>
<keyword id="KW-0813">Transport</keyword>
<organism>
    <name type="scientific">Homo sapiens</name>
    <name type="common">Human</name>
    <dbReference type="NCBI Taxonomy" id="9606"/>
    <lineage>
        <taxon>Eukaryota</taxon>
        <taxon>Metazoa</taxon>
        <taxon>Chordata</taxon>
        <taxon>Craniata</taxon>
        <taxon>Vertebrata</taxon>
        <taxon>Euteleostomi</taxon>
        <taxon>Mammalia</taxon>
        <taxon>Eutheria</taxon>
        <taxon>Euarchontoglires</taxon>
        <taxon>Primates</taxon>
        <taxon>Haplorrhini</taxon>
        <taxon>Catarrhini</taxon>
        <taxon>Hominidae</taxon>
        <taxon>Homo</taxon>
    </lineage>
</organism>
<protein>
    <recommendedName>
        <fullName evidence="18">Plasma membrane calcium-transporting ATPase 4</fullName>
        <shortName evidence="14 19">PMCA4</shortName>
        <ecNumber evidence="13">7.2.2.10</ecNumber>
    </recommendedName>
    <alternativeName>
        <fullName>Matrix-remodeling-associated protein 1</fullName>
    </alternativeName>
    <alternativeName>
        <fullName>Plasma membrane calcium ATPase isoform 4</fullName>
    </alternativeName>
    <alternativeName>
        <fullName>Plasma membrane calcium pump isoform 4</fullName>
    </alternativeName>
</protein>
<feature type="chain" id="PRO_0000046220" description="Plasma membrane calcium-transporting ATPase 4">
    <location>
        <begin position="1"/>
        <end position="1241"/>
    </location>
</feature>
<feature type="topological domain" description="Cytoplasmic" evidence="5">
    <location>
        <begin position="1"/>
        <end position="92"/>
    </location>
</feature>
<feature type="transmembrane region" description="Helical" evidence="5">
    <location>
        <begin position="93"/>
        <end position="113"/>
    </location>
</feature>
<feature type="topological domain" description="Extracellular" evidence="5">
    <location>
        <begin position="114"/>
        <end position="150"/>
    </location>
</feature>
<feature type="transmembrane region" description="Helical" evidence="5">
    <location>
        <begin position="151"/>
        <end position="171"/>
    </location>
</feature>
<feature type="topological domain" description="Cytoplasmic" evidence="5">
    <location>
        <begin position="172"/>
        <end position="356"/>
    </location>
</feature>
<feature type="transmembrane region" description="Helical" evidence="5">
    <location>
        <begin position="357"/>
        <end position="376"/>
    </location>
</feature>
<feature type="topological domain" description="Extracellular" evidence="5">
    <location>
        <begin position="377"/>
        <end position="409"/>
    </location>
</feature>
<feature type="transmembrane region" description="Helical" evidence="5">
    <location>
        <begin position="410"/>
        <end position="427"/>
    </location>
</feature>
<feature type="topological domain" description="Cytoplasmic" evidence="5">
    <location>
        <begin position="428"/>
        <end position="840"/>
    </location>
</feature>
<feature type="transmembrane region" description="Helical" evidence="5">
    <location>
        <begin position="841"/>
        <end position="860"/>
    </location>
</feature>
<feature type="topological domain" description="Extracellular" evidence="5">
    <location>
        <begin position="861"/>
        <end position="870"/>
    </location>
</feature>
<feature type="transmembrane region" description="Helical" evidence="5">
    <location>
        <begin position="871"/>
        <end position="891"/>
    </location>
</feature>
<feature type="topological domain" description="Cytoplasmic" evidence="5">
    <location>
        <begin position="892"/>
        <end position="911"/>
    </location>
</feature>
<feature type="transmembrane region" description="Helical" evidence="5">
    <location>
        <begin position="912"/>
        <end position="934"/>
    </location>
</feature>
<feature type="topological domain" description="Extracellular" evidence="5">
    <location>
        <begin position="935"/>
        <end position="952"/>
    </location>
</feature>
<feature type="transmembrane region" description="Helical" evidence="5">
    <location>
        <begin position="953"/>
        <end position="974"/>
    </location>
</feature>
<feature type="topological domain" description="Cytoplasmic" evidence="5">
    <location>
        <begin position="975"/>
        <end position="993"/>
    </location>
</feature>
<feature type="transmembrane region" description="Helical" evidence="5">
    <location>
        <begin position="994"/>
        <end position="1015"/>
    </location>
</feature>
<feature type="topological domain" description="Extracellular" evidence="5">
    <location>
        <begin position="1016"/>
        <end position="1025"/>
    </location>
</feature>
<feature type="transmembrane region" description="Helical" evidence="5">
    <location>
        <begin position="1026"/>
        <end position="1047"/>
    </location>
</feature>
<feature type="topological domain" description="Cytoplasmic" evidence="5">
    <location>
        <begin position="1048"/>
        <end position="1241"/>
    </location>
</feature>
<feature type="region of interest" description="Disordered" evidence="6">
    <location>
        <begin position="294"/>
        <end position="318"/>
    </location>
</feature>
<feature type="region of interest" description="Calmodulin-binding subdomain A" evidence="12">
    <location>
        <begin position="1086"/>
        <end position="1103"/>
    </location>
</feature>
<feature type="region of interest" description="Calmodulin-binding subdomain B" evidence="3">
    <location>
        <begin position="1104"/>
        <end position="1113"/>
    </location>
</feature>
<feature type="active site" description="4-aspartylphosphate intermediate" evidence="2">
    <location>
        <position position="465"/>
    </location>
</feature>
<feature type="binding site" evidence="1">
    <location>
        <position position="785"/>
    </location>
    <ligand>
        <name>Mg(2+)</name>
        <dbReference type="ChEBI" id="CHEBI:18420"/>
    </ligand>
</feature>
<feature type="binding site" evidence="1">
    <location>
        <position position="789"/>
    </location>
    <ligand>
        <name>Mg(2+)</name>
        <dbReference type="ChEBI" id="CHEBI:18420"/>
    </ligand>
</feature>
<feature type="modified residue" description="Phosphoserine" evidence="21 22">
    <location>
        <position position="13"/>
    </location>
</feature>
<feature type="modified residue" description="Phosphoserine" evidence="21">
    <location>
        <position position="328"/>
    </location>
</feature>
<feature type="modified residue" description="Phosphothreonine; by PKC" evidence="1">
    <location>
        <position position="1102"/>
    </location>
</feature>
<feature type="splice variant" id="VSP_000402" description="In isoform ZA, isoform ZK, isoform ZB and isoform ZD." evidence="18">
    <location>
        <begin position="301"/>
        <end position="312"/>
    </location>
</feature>
<feature type="splice variant" id="VSP_000403" description="In isoform XK and isoform ZK." evidence="18">
    <location>
        <begin position="1009"/>
        <end position="1044"/>
    </location>
</feature>
<feature type="splice variant" id="VSP_000404" description="In isoform XB and isoform ZB." evidence="16 17">
    <location>
        <begin position="1104"/>
        <end position="1139"/>
    </location>
</feature>
<feature type="splice variant" id="VSP_000405" description="In isoform XA, isoform XK, isoform ZA and isoform ZK." evidence="14 15">
    <original>IKVVKAFHSSLHESIQKPYNQKSIHSFMTHPEFAIEEELPRTPLLDEEEEENPDKASKFGTRVLLLDGEVTPYANTNNNAVDCNQVQLPQSDSSLQSLETSV</original>
    <variation>VAVAPVKSSPTTSVPAVSSPPMGNQSGQSVP</variation>
    <location>
        <begin position="1140"/>
        <end position="1241"/>
    </location>
</feature>
<feature type="mutagenesis site" description="Strongly decreased calcium transport activity. Slowed decomposition of the phosphorylated intermediate." evidence="13">
    <original>D</original>
    <variation>Q</variation>
    <location>
        <position position="672"/>
    </location>
</feature>
<feature type="mutagenesis site" description="Decreased calcium transport activity." evidence="13">
    <original>V</original>
    <variation>P</variation>
    <location>
        <position position="674"/>
    </location>
</feature>
<feature type="mutagenesis site" description="Decreased calcium transport activity." evidence="13">
    <original>R</original>
    <variation>K</variation>
    <variation>D</variation>
    <variation>L</variation>
    <location>
        <position position="675"/>
    </location>
</feature>
<feature type="mutagenesis site" description="Decreased calcium transport activity." evidence="13">
    <original>K</original>
    <variation>L</variation>
    <location>
        <position position="686"/>
    </location>
</feature>
<feature type="mutagenesis site" description="Mildly decreased calcium transport activity." evidence="13">
    <original>R</original>
    <variation>I</variation>
    <location>
        <position position="693"/>
    </location>
</feature>
<feature type="sequence conflict" description="In Ref. 3; CAD97686." evidence="18" ref="3">
    <original>S</original>
    <variation>C</variation>
    <location>
        <position position="492"/>
    </location>
</feature>
<feature type="sequence conflict" description="In Ref. 8; AA sequence." evidence="18" ref="8">
    <original>K</original>
    <variation>N</variation>
    <location>
        <position position="1144"/>
    </location>
</feature>
<feature type="sequence conflict" description="In Ref. 8; AA sequence." evidence="18" ref="8">
    <original>H</original>
    <variation>S</variation>
    <location>
        <position position="1147"/>
    </location>
</feature>
<feature type="sequence conflict" description="In Ref. 8; AA sequence." evidence="18" ref="8">
    <original>S</original>
    <variation>F</variation>
    <location>
        <position position="1153"/>
    </location>
</feature>
<feature type="sequence conflict" description="In Ref. 9; AA sequence." evidence="18" ref="9">
    <original>L</original>
    <variation>Q</variation>
    <location>
        <position position="1178"/>
    </location>
</feature>
<feature type="sequence conflict" description="In Ref. 9; AA sequence." evidence="18" ref="9">
    <original>E</original>
    <variation>Q</variation>
    <location>
        <position position="1187"/>
    </location>
</feature>
<feature type="sequence conflict" description="In Ref. 3; CAD97686." evidence="18" ref="3">
    <original>E</original>
    <variation>G</variation>
    <location>
        <position position="1190"/>
    </location>
</feature>
<feature type="turn" evidence="24">
    <location>
        <begin position="1087"/>
        <end position="1089"/>
    </location>
</feature>
<feature type="turn" evidence="23">
    <location>
        <begin position="1090"/>
        <end position="1092"/>
    </location>
</feature>
<feature type="helix" evidence="23">
    <location>
        <begin position="1093"/>
        <end position="1102"/>
    </location>
</feature>